<name>SU1_MAIZE</name>
<reference key="1">
    <citation type="journal article" date="1995" name="Plant Cell">
        <title>Characterization of the maize gene sugary1, a determinant of starch composition in kernels.</title>
        <authorList>
            <person name="James M.G."/>
            <person name="Robertson D.S."/>
            <person name="Myers A.M."/>
        </authorList>
    </citation>
    <scope>NUCLEOTIDE SEQUENCE [MRNA]</scope>
    <scope>FUNCTION</scope>
    <scope>DISRUPTION PHENOTYPE</scope>
    <source>
        <tissue>Endosperm</tissue>
    </source>
</reference>
<reference key="2">
    <citation type="journal article" date="1997" name="Plant Physiol.">
        <title>Genomic nucleotide sequence of a full-length wild-type allele of the maize sugary1 (Su1) gene.</title>
        <authorList>
            <person name="Beatty M.K."/>
            <person name="Myers A.M."/>
            <person name="James M.G."/>
        </authorList>
    </citation>
    <scope>NUCLEOTIDE SEQUENCE [GENOMIC DNA]</scope>
</reference>
<reference key="3">
    <citation type="journal article" date="2009" name="Science">
        <title>The B73 maize genome: complexity, diversity, and dynamics.</title>
        <authorList>
            <person name="Schnable P.S."/>
            <person name="Ware D."/>
            <person name="Fulton R.S."/>
            <person name="Stein J.C."/>
            <person name="Wei F."/>
            <person name="Pasternak S."/>
            <person name="Liang C."/>
            <person name="Zhang J."/>
            <person name="Fulton L."/>
            <person name="Graves T.A."/>
            <person name="Minx P."/>
            <person name="Reily A.D."/>
            <person name="Courtney L."/>
            <person name="Kruchowski S.S."/>
            <person name="Tomlinson C."/>
            <person name="Strong C."/>
            <person name="Delehaunty K."/>
            <person name="Fronick C."/>
            <person name="Courtney B."/>
            <person name="Rock S.M."/>
            <person name="Belter E."/>
            <person name="Du F."/>
            <person name="Kim K."/>
            <person name="Abbott R.M."/>
            <person name="Cotton M."/>
            <person name="Levy A."/>
            <person name="Marchetto P."/>
            <person name="Ochoa K."/>
            <person name="Jackson S.M."/>
            <person name="Gillam B."/>
            <person name="Chen W."/>
            <person name="Yan L."/>
            <person name="Higginbotham J."/>
            <person name="Cardenas M."/>
            <person name="Waligorski J."/>
            <person name="Applebaum E."/>
            <person name="Phelps L."/>
            <person name="Falcone J."/>
            <person name="Kanchi K."/>
            <person name="Thane T."/>
            <person name="Scimone A."/>
            <person name="Thane N."/>
            <person name="Henke J."/>
            <person name="Wang T."/>
            <person name="Ruppert J."/>
            <person name="Shah N."/>
            <person name="Rotter K."/>
            <person name="Hodges J."/>
            <person name="Ingenthron E."/>
            <person name="Cordes M."/>
            <person name="Kohlberg S."/>
            <person name="Sgro J."/>
            <person name="Delgado B."/>
            <person name="Mead K."/>
            <person name="Chinwalla A."/>
            <person name="Leonard S."/>
            <person name="Crouse K."/>
            <person name="Collura K."/>
            <person name="Kudrna D."/>
            <person name="Currie J."/>
            <person name="He R."/>
            <person name="Angelova A."/>
            <person name="Rajasekar S."/>
            <person name="Mueller T."/>
            <person name="Lomeli R."/>
            <person name="Scara G."/>
            <person name="Ko A."/>
            <person name="Delaney K."/>
            <person name="Wissotski M."/>
            <person name="Lopez G."/>
            <person name="Campos D."/>
            <person name="Braidotti M."/>
            <person name="Ashley E."/>
            <person name="Golser W."/>
            <person name="Kim H."/>
            <person name="Lee S."/>
            <person name="Lin J."/>
            <person name="Dujmic Z."/>
            <person name="Kim W."/>
            <person name="Talag J."/>
            <person name="Zuccolo A."/>
            <person name="Fan C."/>
            <person name="Sebastian A."/>
            <person name="Kramer M."/>
            <person name="Spiegel L."/>
            <person name="Nascimento L."/>
            <person name="Zutavern T."/>
            <person name="Miller B."/>
            <person name="Ambroise C."/>
            <person name="Muller S."/>
            <person name="Spooner W."/>
            <person name="Narechania A."/>
            <person name="Ren L."/>
            <person name="Wei S."/>
            <person name="Kumari S."/>
            <person name="Faga B."/>
            <person name="Levy M.J."/>
            <person name="McMahan L."/>
            <person name="Van Buren P."/>
            <person name="Vaughn M.W."/>
            <person name="Ying K."/>
            <person name="Yeh C.-T."/>
            <person name="Emrich S.J."/>
            <person name="Jia Y."/>
            <person name="Kalyanaraman A."/>
            <person name="Hsia A.-P."/>
            <person name="Barbazuk W.B."/>
            <person name="Baucom R.S."/>
            <person name="Brutnell T.P."/>
            <person name="Carpita N.C."/>
            <person name="Chaparro C."/>
            <person name="Chia J.-M."/>
            <person name="Deragon J.-M."/>
            <person name="Estill J.C."/>
            <person name="Fu Y."/>
            <person name="Jeddeloh J.A."/>
            <person name="Han Y."/>
            <person name="Lee H."/>
            <person name="Li P."/>
            <person name="Lisch D.R."/>
            <person name="Liu S."/>
            <person name="Liu Z."/>
            <person name="Nagel D.H."/>
            <person name="McCann M.C."/>
            <person name="SanMiguel P."/>
            <person name="Myers A.M."/>
            <person name="Nettleton D."/>
            <person name="Nguyen J."/>
            <person name="Penning B.W."/>
            <person name="Ponnala L."/>
            <person name="Schneider K.L."/>
            <person name="Schwartz D.C."/>
            <person name="Sharma A."/>
            <person name="Soderlund C."/>
            <person name="Springer N.M."/>
            <person name="Sun Q."/>
            <person name="Wang H."/>
            <person name="Waterman M."/>
            <person name="Westerman R."/>
            <person name="Wolfgruber T.K."/>
            <person name="Yang L."/>
            <person name="Yu Y."/>
            <person name="Zhang L."/>
            <person name="Zhou S."/>
            <person name="Zhu Q."/>
            <person name="Bennetzen J.L."/>
            <person name="Dawe R.K."/>
            <person name="Jiang J."/>
            <person name="Jiang N."/>
            <person name="Presting G.G."/>
            <person name="Wessler S.R."/>
            <person name="Aluru S."/>
            <person name="Martienssen R.A."/>
            <person name="Clifton S.W."/>
            <person name="McCombie W.R."/>
            <person name="Wing R.A."/>
            <person name="Wilson R.K."/>
        </authorList>
    </citation>
    <scope>NUCLEOTIDE SEQUENCE [LARGE SCALE GENOMIC DNA]</scope>
    <source>
        <strain>cv. B73</strain>
    </source>
</reference>
<reference key="4">
    <citation type="journal article" date="2009" name="Plant Mol. Biol.">
        <title>Insights into corn genes derived from large-scale cDNA sequencing.</title>
        <authorList>
            <person name="Alexandrov N.N."/>
            <person name="Brover V.V."/>
            <person name="Freidin S."/>
            <person name="Troukhan M.E."/>
            <person name="Tatarinova T.V."/>
            <person name="Zhang H."/>
            <person name="Swaller T.J."/>
            <person name="Lu Y.-P."/>
            <person name="Bouck J."/>
            <person name="Flavell R.B."/>
            <person name="Feldmann K.A."/>
        </authorList>
    </citation>
    <scope>NUCLEOTIDE SEQUENCE [LARGE SCALE MRNA]</scope>
</reference>
<reference key="5">
    <citation type="journal article" date="1998" name="Plant Physiol.">
        <title>Characterization of SU1 isoamylase, a determinant of storage starch structure in maize.</title>
        <authorList>
            <person name="Rahman A."/>
            <person name="Wong K.S."/>
            <person name="Jane J.L."/>
            <person name="Myers A.M."/>
            <person name="James M.G."/>
        </authorList>
    </citation>
    <scope>FUNCTION</scope>
    <scope>CATALYTIC ACTIVITY</scope>
    <scope>BIOPHYSICOCHEMICAL PROPERTIES</scope>
    <scope>DEVELOPMENTAL STAGE</scope>
</reference>
<feature type="transit peptide" description="Chloroplast" evidence="2">
    <location>
        <begin position="1"/>
        <end position="44"/>
    </location>
</feature>
<feature type="chain" id="PRO_0000455589" description="Isoamylase SU1, chloroplastic">
    <location>
        <begin position="45"/>
        <end position="789"/>
    </location>
</feature>
<feature type="active site" description="Nucleophile" evidence="1">
    <location>
        <position position="417"/>
    </location>
</feature>
<feature type="active site" description="Proton donor" evidence="1">
    <location>
        <position position="473"/>
    </location>
</feature>
<feature type="site" description="Transition state stabilizer" evidence="1">
    <location>
        <position position="546"/>
    </location>
</feature>
<feature type="sequence conflict" description="In Ref. 1; AAA91298." evidence="6" ref="1">
    <original>C</original>
    <variation>S</variation>
    <location>
        <position position="112"/>
    </location>
</feature>
<feature type="sequence conflict" description="In Ref. 1; AAA91298." evidence="6" ref="1">
    <original>Q</original>
    <variation>E</variation>
    <location>
        <position position="149"/>
    </location>
</feature>
<feature type="sequence conflict" description="In Ref. 1; AAA91298." evidence="6" ref="1">
    <original>Y</original>
    <variation>C</variation>
    <location>
        <position position="155"/>
    </location>
</feature>
<feature type="sequence conflict" description="In Ref. 1; AAA91298." evidence="6" ref="1">
    <original>V</original>
    <variation>E</variation>
    <location>
        <position position="483"/>
    </location>
</feature>
<feature type="sequence conflict" description="In Ref. 1; AAA91298." evidence="6" ref="1">
    <original>N</original>
    <variation>G</variation>
    <location>
        <position position="540"/>
    </location>
</feature>
<feature type="sequence conflict" description="In Ref. 1; AAA91298." evidence="6" ref="1">
    <original>N</original>
    <variation>F</variation>
    <location>
        <position position="568"/>
    </location>
</feature>
<feature type="sequence conflict" description="In Ref. 1; AAA91298." evidence="6" ref="1">
    <original>K</original>
    <variation>E</variation>
    <location>
        <position position="662"/>
    </location>
</feature>
<feature type="sequence conflict" description="In Ref. 4; ACG43008." evidence="6" ref="4">
    <original>G</original>
    <variation>E</variation>
    <location>
        <position position="689"/>
    </location>
</feature>
<accession>O22637</accession>
<accession>A0A1D6PXQ9</accession>
<accession>B6U0X5</accession>
<accession>Q41742</accession>
<gene>
    <name evidence="5" type="primary">SU1</name>
    <name evidence="7" type="ORF">ZEAMMB73_Zm00001d049753</name>
</gene>
<sequence length="789" mass="88353">MAQQLPCVSSPRPLLAVPAGRWRAGVRGRPNVAGLGRGRLSLHAAAARPVAEAVQAEEDDDDDDEEVAEERFALGGACRVLAGMPAPLGATALRGGVNFAVYSSGASAASLCLFAPGDLKADRVTEEVPLDPLLNRTGNVWHVFIHGDQLHGMLYGYRFDGVFAPERGQYYDVSNVVVDPYAKAVVSRGEYGVPAPGGSCWPQMAGMIPLPYNKFDWQGDLPLGYHQKDLVIYEMHLRGFTKHNSSKTKHPGTYIGAVSKLDHLKELGVNCIELMPCHEFNELEYFSSSSKMNFWGYSTINFFSPMARYSSSGIRDSGCGAINEFKAFVREAHKRGIEVIMDVVFNHTAEGNEKGPILSFRGIDNSTYYMLAPKGEFYNYSGCGNTFNCNHPVVREFIVDCLRYWVTEMHVDGFRFDLASILTRGCSLWDPVNVYGSPMEGDMITTGTPLVAPPLIDMISNDPILGNVKLIAEAWDAGGLYQVGQFPHWNVWSEWNGKYRDTVRQFIKGTDGFAGAFAECLCGSPQLYQAGGRKPWHSINFVCAHDGFTLADLVTYNSKYNLSNGEDNRDGENHNLSWNCGEEGEFASLSVRRLRKRQMRNFFVCLMVSQGVPMFYMGDEYGHTKGGNNNTYCHDHYVNYFRWDKKEEQSSDLYRFCRLMTKFRKECESLGLEDFPTSERLKWHGHQPGKPDWSEASRFVAFTMKDETKGEIYVAFNTSHLPVVVGLPERSGFRWEPVVDTGKEAPYDFLTDGLPDRAVTVYQFSHFLNSNLYPMLSYSSIILVLRPDV</sequence>
<dbReference type="EC" id="3.2.1.68" evidence="4"/>
<dbReference type="EMBL" id="U18908">
    <property type="protein sequence ID" value="AAA91298.1"/>
    <property type="status" value="ALT_INIT"/>
    <property type="molecule type" value="mRNA"/>
</dbReference>
<dbReference type="EMBL" id="AF030882">
    <property type="protein sequence ID" value="AAB97167.1"/>
    <property type="molecule type" value="Genomic_DNA"/>
</dbReference>
<dbReference type="EMBL" id="CM000780">
    <property type="protein sequence ID" value="AQK51280.1"/>
    <property type="status" value="ALT_SEQ"/>
    <property type="molecule type" value="Genomic_DNA"/>
</dbReference>
<dbReference type="EMBL" id="EU970890">
    <property type="protein sequence ID" value="ACG43008.1"/>
    <property type="molecule type" value="mRNA"/>
</dbReference>
<dbReference type="PIR" id="T01321">
    <property type="entry name" value="T01321"/>
</dbReference>
<dbReference type="SMR" id="O22637"/>
<dbReference type="FunCoup" id="O22637">
    <property type="interactions" value="425"/>
</dbReference>
<dbReference type="IntAct" id="O22637">
    <property type="interactions" value="5"/>
</dbReference>
<dbReference type="STRING" id="4577.A0A1D6PXQ9"/>
<dbReference type="CAZy" id="CBM48">
    <property type="family name" value="Carbohydrate-Binding Module Family 48"/>
</dbReference>
<dbReference type="CAZy" id="GH13">
    <property type="family name" value="Glycoside Hydrolase Family 13"/>
</dbReference>
<dbReference type="EnsemblPlants" id="Zm00001eb174590_T001">
    <property type="protein sequence ID" value="Zm00001eb174590_P001"/>
    <property type="gene ID" value="Zm00001eb174590"/>
</dbReference>
<dbReference type="GeneID" id="542318"/>
<dbReference type="Gramene" id="Zm00001eb174590_T001">
    <property type="protein sequence ID" value="Zm00001eb174590_P001"/>
    <property type="gene ID" value="Zm00001eb174590"/>
</dbReference>
<dbReference type="KEGG" id="zma:542318"/>
<dbReference type="MaizeGDB" id="112979"/>
<dbReference type="HOGENOM" id="CLU_011725_1_1_1"/>
<dbReference type="InParanoid" id="O22637"/>
<dbReference type="OrthoDB" id="204980at2759"/>
<dbReference type="BRENDA" id="3.2.1.68">
    <property type="organism ID" value="6752"/>
</dbReference>
<dbReference type="UniPathway" id="UPA00152"/>
<dbReference type="Proteomes" id="UP000007305">
    <property type="component" value="Chromosome 4"/>
</dbReference>
<dbReference type="ExpressionAtlas" id="O22637">
    <property type="expression patterns" value="baseline and differential"/>
</dbReference>
<dbReference type="GO" id="GO:0010368">
    <property type="term" value="C:chloroplast isoamylase complex"/>
    <property type="evidence" value="ECO:0007669"/>
    <property type="project" value="EnsemblPlants"/>
</dbReference>
<dbReference type="GO" id="GO:0019156">
    <property type="term" value="F:isoamylase activity"/>
    <property type="evidence" value="ECO:0000314"/>
    <property type="project" value="UniProtKB"/>
</dbReference>
<dbReference type="GO" id="GO:0010021">
    <property type="term" value="P:amylopectin biosynthetic process"/>
    <property type="evidence" value="ECO:0000315"/>
    <property type="project" value="UniProtKB"/>
</dbReference>
<dbReference type="GO" id="GO:0019252">
    <property type="term" value="P:starch biosynthetic process"/>
    <property type="evidence" value="ECO:0007669"/>
    <property type="project" value="UniProtKB-UniPathway"/>
</dbReference>
<dbReference type="GO" id="GO:0005983">
    <property type="term" value="P:starch catabolic process"/>
    <property type="evidence" value="ECO:0007669"/>
    <property type="project" value="EnsemblPlants"/>
</dbReference>
<dbReference type="CDD" id="cd11326">
    <property type="entry name" value="AmyAc_Glg_debranch"/>
    <property type="match status" value="1"/>
</dbReference>
<dbReference type="CDD" id="cd02856">
    <property type="entry name" value="E_set_GDE_Isoamylase_N"/>
    <property type="match status" value="1"/>
</dbReference>
<dbReference type="FunFam" id="3.20.20.80:FF:000054">
    <property type="entry name" value="Glycogen debranching enzyme"/>
    <property type="match status" value="1"/>
</dbReference>
<dbReference type="FunFam" id="2.60.40.10:FF:001593">
    <property type="entry name" value="Isoamylase 1, chloroplastic"/>
    <property type="match status" value="1"/>
</dbReference>
<dbReference type="Gene3D" id="3.20.20.80">
    <property type="entry name" value="Glycosidases"/>
    <property type="match status" value="1"/>
</dbReference>
<dbReference type="Gene3D" id="2.60.40.1180">
    <property type="entry name" value="Golgi alpha-mannosidase II"/>
    <property type="match status" value="1"/>
</dbReference>
<dbReference type="Gene3D" id="2.60.40.10">
    <property type="entry name" value="Immunoglobulins"/>
    <property type="match status" value="1"/>
</dbReference>
<dbReference type="InterPro" id="IPR044505">
    <property type="entry name" value="GlgX_Isoamylase_N_E_set"/>
</dbReference>
<dbReference type="InterPro" id="IPR006047">
    <property type="entry name" value="Glyco_hydro_13_cat_dom"/>
</dbReference>
<dbReference type="InterPro" id="IPR004193">
    <property type="entry name" value="Glyco_hydro_13_N"/>
</dbReference>
<dbReference type="InterPro" id="IPR013780">
    <property type="entry name" value="Glyco_hydro_b"/>
</dbReference>
<dbReference type="InterPro" id="IPR017853">
    <property type="entry name" value="Glycoside_hydrolase_SF"/>
</dbReference>
<dbReference type="InterPro" id="IPR013783">
    <property type="entry name" value="Ig-like_fold"/>
</dbReference>
<dbReference type="InterPro" id="IPR014756">
    <property type="entry name" value="Ig_E-set"/>
</dbReference>
<dbReference type="InterPro" id="IPR048650">
    <property type="entry name" value="ISOA1-3-like_C"/>
</dbReference>
<dbReference type="PANTHER" id="PTHR43002">
    <property type="entry name" value="GLYCOGEN DEBRANCHING ENZYME"/>
    <property type="match status" value="1"/>
</dbReference>
<dbReference type="Pfam" id="PF00128">
    <property type="entry name" value="Alpha-amylase"/>
    <property type="match status" value="1"/>
</dbReference>
<dbReference type="Pfam" id="PF02922">
    <property type="entry name" value="CBM_48"/>
    <property type="match status" value="1"/>
</dbReference>
<dbReference type="Pfam" id="PF21156">
    <property type="entry name" value="ISOA1-3_C"/>
    <property type="match status" value="1"/>
</dbReference>
<dbReference type="SMART" id="SM00642">
    <property type="entry name" value="Aamy"/>
    <property type="match status" value="1"/>
</dbReference>
<dbReference type="SUPFAM" id="SSF51445">
    <property type="entry name" value="(Trans)glycosidases"/>
    <property type="match status" value="1"/>
</dbReference>
<dbReference type="SUPFAM" id="SSF81296">
    <property type="entry name" value="E set domains"/>
    <property type="match status" value="1"/>
</dbReference>
<dbReference type="SUPFAM" id="SSF51011">
    <property type="entry name" value="Glycosyl hydrolase domain"/>
    <property type="match status" value="1"/>
</dbReference>
<proteinExistence type="evidence at protein level"/>
<comment type="function">
    <text evidence="3 4">Isoamylase starch-debranching enzyme involved in amylopectin biosynthesis in endosperm (PubMed:7773016, PubMed:9625695). Functions by removing excess branches or improper branches that interfere with the formation of double helices of the cluster chains of amylopectin and crystallization of starch (PubMed:9625695).</text>
</comment>
<comment type="catalytic activity">
    <reaction evidence="4">
        <text>Hydrolysis of (1-&gt;6)-alpha-D-glucosidic branch linkages in glycogen, amylopectin and their beta-limit dextrins.</text>
        <dbReference type="EC" id="3.2.1.68"/>
    </reaction>
</comment>
<comment type="biophysicochemical properties">
    <phDependence>
        <text evidence="4">Optimum pH is 6.0.</text>
    </phDependence>
    <temperatureDependence>
        <text evidence="4">Optimum temperature is 30 degrees Celsius.</text>
    </temperatureDependence>
</comment>
<comment type="pathway">
    <text evidence="6">Glycan biosynthesis; starch biosynthesis.</text>
</comment>
<comment type="subcellular location">
    <subcellularLocation>
        <location evidence="2">Plastid</location>
        <location evidence="2">Chloroplast</location>
    </subcellularLocation>
</comment>
<comment type="developmental stage">
    <text evidence="4">During endosperm development, expressed in kernels from 10 to 30 days after pollination (at protein level).</text>
</comment>
<comment type="disruption phenotype">
    <text evidence="3">In maize kernels, mutations in SU1 result in, increased sucrose concentration, decreased concentration of amylopectin, the branched component of starch, and accumulation of the highly branched glucopolysaccharide phytoglycogen.</text>
</comment>
<comment type="similarity">
    <text evidence="6">Belongs to the glycosyl hydrolase 13 family.</text>
</comment>
<comment type="sequence caution" evidence="6">
    <conflict type="erroneous initiation">
        <sequence resource="EMBL-CDS" id="AAA91298"/>
    </conflict>
    <text>Extended N-terminus.</text>
</comment>
<comment type="sequence caution" evidence="6">
    <conflict type="erroneous gene model prediction">
        <sequence resource="EMBL-CDS" id="AQK51280"/>
    </conflict>
</comment>
<evidence type="ECO:0000250" key="1">
    <source>
        <dbReference type="UniProtKB" id="P04746"/>
    </source>
</evidence>
<evidence type="ECO:0000255" key="2"/>
<evidence type="ECO:0000269" key="3">
    <source>
    </source>
</evidence>
<evidence type="ECO:0000269" key="4">
    <source>
    </source>
</evidence>
<evidence type="ECO:0000303" key="5">
    <source>
    </source>
</evidence>
<evidence type="ECO:0000305" key="6"/>
<evidence type="ECO:0000312" key="7">
    <source>
        <dbReference type="EMBL" id="AQK51280.1"/>
    </source>
</evidence>
<organism>
    <name type="scientific">Zea mays</name>
    <name type="common">Maize</name>
    <dbReference type="NCBI Taxonomy" id="4577"/>
    <lineage>
        <taxon>Eukaryota</taxon>
        <taxon>Viridiplantae</taxon>
        <taxon>Streptophyta</taxon>
        <taxon>Embryophyta</taxon>
        <taxon>Tracheophyta</taxon>
        <taxon>Spermatophyta</taxon>
        <taxon>Magnoliopsida</taxon>
        <taxon>Liliopsida</taxon>
        <taxon>Poales</taxon>
        <taxon>Poaceae</taxon>
        <taxon>PACMAD clade</taxon>
        <taxon>Panicoideae</taxon>
        <taxon>Andropogonodae</taxon>
        <taxon>Andropogoneae</taxon>
        <taxon>Tripsacinae</taxon>
        <taxon>Zea</taxon>
    </lineage>
</organism>
<protein>
    <recommendedName>
        <fullName evidence="6">Isoamylase SU1, chloroplastic</fullName>
        <ecNumber evidence="4">3.2.1.68</ecNumber>
    </recommendedName>
    <alternativeName>
        <fullName evidence="5">Protein SUGARY 1</fullName>
    </alternativeName>
</protein>
<keyword id="KW-0150">Chloroplast</keyword>
<keyword id="KW-0378">Hydrolase</keyword>
<keyword id="KW-0934">Plastid</keyword>
<keyword id="KW-1185">Reference proteome</keyword>
<keyword id="KW-0809">Transit peptide</keyword>